<protein>
    <recommendedName>
        <fullName>Thrombin-like enzyme ancrod</fullName>
        <shortName>SVTLE</shortName>
        <ecNumber>3.4.21.74</ecNumber>
    </recommendedName>
    <alternativeName>
        <fullName>Fibrinogen-clotting enzyme</fullName>
    </alternativeName>
    <alternativeName>
        <fullName>Snake venom serine protease</fullName>
        <shortName>SVSP</shortName>
    </alternativeName>
    <alternativeName>
        <fullName>Venombin A</fullName>
    </alternativeName>
</protein>
<proteinExistence type="evidence at protein level"/>
<accession>P26324</accession>
<keyword id="KW-1203">Blood coagulation cascade inhibiting toxin</keyword>
<keyword id="KW-0903">Direct protein sequencing</keyword>
<keyword id="KW-1015">Disulfide bond</keyword>
<keyword id="KW-0325">Glycoprotein</keyword>
<keyword id="KW-1199">Hemostasis impairing toxin</keyword>
<keyword id="KW-0378">Hydrolase</keyword>
<keyword id="KW-0582">Pharmaceutical</keyword>
<keyword id="KW-0645">Protease</keyword>
<keyword id="KW-0964">Secreted</keyword>
<keyword id="KW-0720">Serine protease</keyword>
<keyword id="KW-0800">Toxin</keyword>
<organism>
    <name type="scientific">Calloselasma rhodostoma</name>
    <name type="common">Malayan pit viper</name>
    <name type="synonym">Agkistrodon rhodostoma</name>
    <dbReference type="NCBI Taxonomy" id="8717"/>
    <lineage>
        <taxon>Eukaryota</taxon>
        <taxon>Metazoa</taxon>
        <taxon>Chordata</taxon>
        <taxon>Craniata</taxon>
        <taxon>Vertebrata</taxon>
        <taxon>Euteleostomi</taxon>
        <taxon>Lepidosauria</taxon>
        <taxon>Squamata</taxon>
        <taxon>Bifurcata</taxon>
        <taxon>Unidentata</taxon>
        <taxon>Episquamata</taxon>
        <taxon>Toxicofera</taxon>
        <taxon>Serpentes</taxon>
        <taxon>Colubroidea</taxon>
        <taxon>Viperidae</taxon>
        <taxon>Crotalinae</taxon>
        <taxon>Calloselasma</taxon>
    </lineage>
</organism>
<reference key="1">
    <citation type="journal article" date="1992" name="FEBS Lett.">
        <title>Amino acid sequence determination of ancrod, the thrombin-like alpha-fibrinogenase from the venom of Akistrodon rhodostoma.</title>
        <authorList>
            <person name="Burkhart W."/>
            <person name="Simth G.F.H."/>
            <person name="Su J.-L."/>
            <person name="Parikh I."/>
            <person name="Levine H. III"/>
        </authorList>
    </citation>
    <scope>PROTEIN SEQUENCE</scope>
    <source>
        <tissue>Venom</tissue>
    </source>
</reference>
<name>VSPF1_CALRH</name>
<evidence type="ECO:0000255" key="1">
    <source>
        <dbReference type="PROSITE-ProRule" id="PRU00274"/>
    </source>
</evidence>
<evidence type="ECO:0000269" key="2">
    <source>
    </source>
</evidence>
<comment type="function">
    <text>Thrombin-like snake venom serine protease that acts as an anticoagulant. It cleaves fibrinogen (FGA) to split off the A-fibrinopeptides (A, AY and AP), but not the B-fibrinopeptide. The resulting fibrin polymers are imperfectly formed and much smaller in size (1 to 2 um long) than the fibrin polymers produced by the action of thrombin. These ancrod-induced microthrombi are friable, unstable, urea-soluble and have significantly degraded alpha chains. They do not cross-link to form thrombi. They are markedly susceptible to digestion by plasmin and are rapidly removed from circulation by either reticuloendothelial phagocytosis or normal fibrinolysis, or both. Anticoagulation through the removal of fibrinogen from the blood is rapid, occurring within hours following its administration. It does not activate plasminogen and does not degrade preformed, fully cross-linked thrombin fibrin. It also reduces the level of plasminogen activator inhibitor (PAI) and may stimulate the release of tissue plasminogen activator (PLAT) from the endothelium. The profibrinolytic effect of these 2 actions appears to be limited to local microthrombus degradation.</text>
</comment>
<comment type="catalytic activity">
    <reaction>
        <text>Selective cleavage of Arg-|-Xaa bond in fibrinogen, to form fibrin, and release fibrinopeptide A. The specificity of further degradation of fibrinogen varies with species origin of the enzyme.</text>
        <dbReference type="EC" id="3.4.21.74"/>
    </reaction>
</comment>
<comment type="subunit">
    <text>Monomer.</text>
</comment>
<comment type="subcellular location">
    <subcellularLocation>
        <location>Secreted</location>
    </subcellularLocation>
</comment>
<comment type="tissue specificity">
    <text>Expressed by the venom gland.</text>
</comment>
<comment type="pharmaceutical">
    <text>Used for the treatment of acute ischemic stroke. Until 2002 was available under the brand name Arvin or Arwin (Knoll). Is actually available under the brand name Viprinex (Abbott).</text>
</comment>
<comment type="similarity">
    <text evidence="1">Belongs to the peptidase S1 family. Snake venom subfamily.</text>
</comment>
<comment type="online information" name="Wikipedia">
    <link uri="https://en.wikipedia.org/wiki/Ancrod"/>
    <text>Ancrod entry</text>
</comment>
<comment type="online information" name="RxMed">
    <link uri="https://www.rxmed.com/b.main/b2.pharmaceutical/b2.1.monographs/cps-_monographs/CPS-_(General_Monographs-_V)/VIPRINEX.html"/>
    <text>Viprinex entry</text>
</comment>
<dbReference type="EC" id="3.4.21.74"/>
<dbReference type="PIR" id="S20407">
    <property type="entry name" value="S20407"/>
</dbReference>
<dbReference type="SMR" id="P26324"/>
<dbReference type="MEROPS" id="S01.178"/>
<dbReference type="GlyConnect" id="50">
    <property type="glycosylation" value="24 N-Linked glycans"/>
</dbReference>
<dbReference type="iPTMnet" id="P26324"/>
<dbReference type="BRENDA" id="3.4.21.74">
    <property type="organism ID" value="198"/>
</dbReference>
<dbReference type="GO" id="GO:0005576">
    <property type="term" value="C:extracellular region"/>
    <property type="evidence" value="ECO:0007669"/>
    <property type="project" value="UniProtKB-SubCell"/>
</dbReference>
<dbReference type="GO" id="GO:0030141">
    <property type="term" value="C:secretory granule"/>
    <property type="evidence" value="ECO:0007669"/>
    <property type="project" value="TreeGrafter"/>
</dbReference>
<dbReference type="GO" id="GO:0004252">
    <property type="term" value="F:serine-type endopeptidase activity"/>
    <property type="evidence" value="ECO:0007669"/>
    <property type="project" value="InterPro"/>
</dbReference>
<dbReference type="GO" id="GO:0090729">
    <property type="term" value="F:toxin activity"/>
    <property type="evidence" value="ECO:0007669"/>
    <property type="project" value="UniProtKB-KW"/>
</dbReference>
<dbReference type="GO" id="GO:0006508">
    <property type="term" value="P:proteolysis"/>
    <property type="evidence" value="ECO:0007669"/>
    <property type="project" value="UniProtKB-KW"/>
</dbReference>
<dbReference type="CDD" id="cd00190">
    <property type="entry name" value="Tryp_SPc"/>
    <property type="match status" value="1"/>
</dbReference>
<dbReference type="FunFam" id="2.40.10.10:FF:000010">
    <property type="entry name" value="Kallikrein related peptidase 11"/>
    <property type="match status" value="1"/>
</dbReference>
<dbReference type="Gene3D" id="2.40.10.10">
    <property type="entry name" value="Trypsin-like serine proteases"/>
    <property type="match status" value="2"/>
</dbReference>
<dbReference type="InterPro" id="IPR009003">
    <property type="entry name" value="Peptidase_S1_PA"/>
</dbReference>
<dbReference type="InterPro" id="IPR043504">
    <property type="entry name" value="Peptidase_S1_PA_chymotrypsin"/>
</dbReference>
<dbReference type="InterPro" id="IPR001314">
    <property type="entry name" value="Peptidase_S1A"/>
</dbReference>
<dbReference type="InterPro" id="IPR001254">
    <property type="entry name" value="Trypsin_dom"/>
</dbReference>
<dbReference type="PANTHER" id="PTHR24271:SF47">
    <property type="entry name" value="KALLIKREIN-1"/>
    <property type="match status" value="1"/>
</dbReference>
<dbReference type="PANTHER" id="PTHR24271">
    <property type="entry name" value="KALLIKREIN-RELATED"/>
    <property type="match status" value="1"/>
</dbReference>
<dbReference type="Pfam" id="PF00089">
    <property type="entry name" value="Trypsin"/>
    <property type="match status" value="1"/>
</dbReference>
<dbReference type="PRINTS" id="PR00722">
    <property type="entry name" value="CHYMOTRYPSIN"/>
</dbReference>
<dbReference type="SMART" id="SM00020">
    <property type="entry name" value="Tryp_SPc"/>
    <property type="match status" value="1"/>
</dbReference>
<dbReference type="SUPFAM" id="SSF50494">
    <property type="entry name" value="Trypsin-like serine proteases"/>
    <property type="match status" value="1"/>
</dbReference>
<dbReference type="PROSITE" id="PS50240">
    <property type="entry name" value="TRYPSIN_DOM"/>
    <property type="match status" value="1"/>
</dbReference>
<feature type="chain" id="PRO_0000088730" description="Thrombin-like enzyme ancrod">
    <location>
        <begin position="1"/>
        <end position="234"/>
    </location>
</feature>
<feature type="domain" description="Peptidase S1" evidence="1">
    <location>
        <begin position="1"/>
        <end position="227"/>
    </location>
</feature>
<feature type="active site" description="Charge relay system" evidence="1">
    <location>
        <position position="43"/>
    </location>
</feature>
<feature type="active site" description="Charge relay system" evidence="1">
    <location>
        <position position="88"/>
    </location>
</feature>
<feature type="active site" description="Charge relay system" evidence="1">
    <location>
        <position position="182"/>
    </location>
</feature>
<feature type="glycosylation site" description="N-linked (GlcNAc...) asparagine" evidence="2">
    <location>
        <position position="23"/>
    </location>
</feature>
<feature type="glycosylation site" description="N-linked (GlcNAc...) asparagine" evidence="2">
    <location>
        <position position="79"/>
    </location>
</feature>
<feature type="glycosylation site" description="N-linked (GlcNAc...) asparagine" evidence="2">
    <location>
        <position position="99"/>
    </location>
</feature>
<feature type="glycosylation site" description="N-linked (GlcNAc...) asparagine" evidence="2">
    <location>
        <position position="148"/>
    </location>
</feature>
<feature type="glycosylation site" description="N-linked (GlcNAc...) asparagine" evidence="2">
    <location>
        <position position="229"/>
    </location>
</feature>
<feature type="disulfide bond" evidence="1">
    <location>
        <begin position="7"/>
        <end position="141"/>
    </location>
</feature>
<feature type="disulfide bond" evidence="1">
    <location>
        <begin position="28"/>
        <end position="44"/>
    </location>
</feature>
<feature type="disulfide bond" evidence="1">
    <location>
        <begin position="78"/>
        <end position="232"/>
    </location>
</feature>
<feature type="disulfide bond" evidence="1">
    <location>
        <begin position="120"/>
        <end position="188"/>
    </location>
</feature>
<feature type="disulfide bond" evidence="1">
    <location>
        <begin position="152"/>
        <end position="167"/>
    </location>
</feature>
<feature type="disulfide bond" evidence="1">
    <location>
        <begin position="178"/>
        <end position="203"/>
    </location>
</feature>
<sequence length="234" mass="26570">VIGGDECNINEHRFLVAVYEGTNWTFICGGVLIHPEWVITAEHCARRRMNLVFGMHRKSEKFDDEQERYPKKRYFIRCNKTRTSWDEDIMLIRLNKPVNNSEHIAPLSLPSNPPIVGSDCRVMGWGSINRRIDVLSDEPRCANINLHNFTMCHGLFRKMPKKGRVLCAGDLRGRRDSCNSDSGGPLICNEELHGIVARGPNPCAQPNKPALYTSIYDYRDWVNNVIAGNATCSP</sequence>